<proteinExistence type="inferred from homology"/>
<gene>
    <name evidence="2" type="primary">ddl</name>
    <name type="ordered locus">GOX0161</name>
</gene>
<comment type="function">
    <text evidence="2">Cell wall formation.</text>
</comment>
<comment type="catalytic activity">
    <reaction evidence="2">
        <text>2 D-alanine + ATP = D-alanyl-D-alanine + ADP + phosphate + H(+)</text>
        <dbReference type="Rhea" id="RHEA:11224"/>
        <dbReference type="ChEBI" id="CHEBI:15378"/>
        <dbReference type="ChEBI" id="CHEBI:30616"/>
        <dbReference type="ChEBI" id="CHEBI:43474"/>
        <dbReference type="ChEBI" id="CHEBI:57416"/>
        <dbReference type="ChEBI" id="CHEBI:57822"/>
        <dbReference type="ChEBI" id="CHEBI:456216"/>
        <dbReference type="EC" id="6.3.2.4"/>
    </reaction>
</comment>
<comment type="cofactor">
    <cofactor evidence="1">
        <name>Mg(2+)</name>
        <dbReference type="ChEBI" id="CHEBI:18420"/>
    </cofactor>
    <cofactor evidence="1">
        <name>Mn(2+)</name>
        <dbReference type="ChEBI" id="CHEBI:29035"/>
    </cofactor>
    <text evidence="1">Binds 2 magnesium or manganese ions per subunit.</text>
</comment>
<comment type="pathway">
    <text evidence="2">Cell wall biogenesis; peptidoglycan biosynthesis.</text>
</comment>
<comment type="subcellular location">
    <subcellularLocation>
        <location evidence="2">Cytoplasm</location>
    </subcellularLocation>
</comment>
<comment type="similarity">
    <text evidence="2">Belongs to the D-alanine--D-alanine ligase family.</text>
</comment>
<feature type="chain" id="PRO_1000030451" description="D-alanine--D-alanine ligase">
    <location>
        <begin position="1"/>
        <end position="303"/>
    </location>
</feature>
<feature type="domain" description="ATP-grasp" evidence="2">
    <location>
        <begin position="102"/>
        <end position="298"/>
    </location>
</feature>
<feature type="binding site" evidence="2">
    <location>
        <begin position="128"/>
        <end position="181"/>
    </location>
    <ligand>
        <name>ATP</name>
        <dbReference type="ChEBI" id="CHEBI:30616"/>
    </ligand>
</feature>
<feature type="binding site" evidence="2">
    <location>
        <position position="251"/>
    </location>
    <ligand>
        <name>Mg(2+)</name>
        <dbReference type="ChEBI" id="CHEBI:18420"/>
        <label>1</label>
    </ligand>
</feature>
<feature type="binding site" evidence="2">
    <location>
        <position position="265"/>
    </location>
    <ligand>
        <name>Mg(2+)</name>
        <dbReference type="ChEBI" id="CHEBI:18420"/>
        <label>1</label>
    </ligand>
</feature>
<feature type="binding site" evidence="2">
    <location>
        <position position="265"/>
    </location>
    <ligand>
        <name>Mg(2+)</name>
        <dbReference type="ChEBI" id="CHEBI:18420"/>
        <label>2</label>
    </ligand>
</feature>
<feature type="binding site" evidence="2">
    <location>
        <position position="267"/>
    </location>
    <ligand>
        <name>Mg(2+)</name>
        <dbReference type="ChEBI" id="CHEBI:18420"/>
        <label>2</label>
    </ligand>
</feature>
<reference key="1">
    <citation type="journal article" date="2005" name="Nat. Biotechnol.">
        <title>Complete genome sequence of the acetic acid bacterium Gluconobacter oxydans.</title>
        <authorList>
            <person name="Prust C."/>
            <person name="Hoffmeister M."/>
            <person name="Liesegang H."/>
            <person name="Wiezer A."/>
            <person name="Fricke W.F."/>
            <person name="Ehrenreich A."/>
            <person name="Gottschalk G."/>
            <person name="Deppenmeier U."/>
        </authorList>
    </citation>
    <scope>NUCLEOTIDE SEQUENCE [LARGE SCALE GENOMIC DNA]</scope>
    <source>
        <strain>621H</strain>
    </source>
</reference>
<evidence type="ECO:0000250" key="1"/>
<evidence type="ECO:0000255" key="2">
    <source>
        <dbReference type="HAMAP-Rule" id="MF_00047"/>
    </source>
</evidence>
<dbReference type="EC" id="6.3.2.4" evidence="2"/>
<dbReference type="EMBL" id="CP000009">
    <property type="protein sequence ID" value="AAW59954.1"/>
    <property type="molecule type" value="Genomic_DNA"/>
</dbReference>
<dbReference type="RefSeq" id="WP_011251757.1">
    <property type="nucleotide sequence ID" value="NC_006677.1"/>
</dbReference>
<dbReference type="SMR" id="Q5FUJ2"/>
<dbReference type="STRING" id="290633.GOX0161"/>
<dbReference type="KEGG" id="gox:GOX0161"/>
<dbReference type="eggNOG" id="COG1181">
    <property type="taxonomic scope" value="Bacteria"/>
</dbReference>
<dbReference type="HOGENOM" id="CLU_039268_1_1_5"/>
<dbReference type="UniPathway" id="UPA00219"/>
<dbReference type="Proteomes" id="UP000006375">
    <property type="component" value="Chromosome"/>
</dbReference>
<dbReference type="GO" id="GO:0005737">
    <property type="term" value="C:cytoplasm"/>
    <property type="evidence" value="ECO:0007669"/>
    <property type="project" value="UniProtKB-SubCell"/>
</dbReference>
<dbReference type="GO" id="GO:0005524">
    <property type="term" value="F:ATP binding"/>
    <property type="evidence" value="ECO:0007669"/>
    <property type="project" value="UniProtKB-KW"/>
</dbReference>
<dbReference type="GO" id="GO:0008716">
    <property type="term" value="F:D-alanine-D-alanine ligase activity"/>
    <property type="evidence" value="ECO:0007669"/>
    <property type="project" value="UniProtKB-UniRule"/>
</dbReference>
<dbReference type="GO" id="GO:0046872">
    <property type="term" value="F:metal ion binding"/>
    <property type="evidence" value="ECO:0007669"/>
    <property type="project" value="UniProtKB-KW"/>
</dbReference>
<dbReference type="GO" id="GO:0071555">
    <property type="term" value="P:cell wall organization"/>
    <property type="evidence" value="ECO:0007669"/>
    <property type="project" value="UniProtKB-KW"/>
</dbReference>
<dbReference type="GO" id="GO:0009252">
    <property type="term" value="P:peptidoglycan biosynthetic process"/>
    <property type="evidence" value="ECO:0007669"/>
    <property type="project" value="UniProtKB-UniRule"/>
</dbReference>
<dbReference type="GO" id="GO:0008360">
    <property type="term" value="P:regulation of cell shape"/>
    <property type="evidence" value="ECO:0007669"/>
    <property type="project" value="UniProtKB-KW"/>
</dbReference>
<dbReference type="Gene3D" id="3.40.50.20">
    <property type="match status" value="1"/>
</dbReference>
<dbReference type="Gene3D" id="3.30.1490.20">
    <property type="entry name" value="ATP-grasp fold, A domain"/>
    <property type="match status" value="1"/>
</dbReference>
<dbReference type="Gene3D" id="3.30.470.20">
    <property type="entry name" value="ATP-grasp fold, B domain"/>
    <property type="match status" value="1"/>
</dbReference>
<dbReference type="HAMAP" id="MF_00047">
    <property type="entry name" value="Dala_Dala_lig"/>
    <property type="match status" value="1"/>
</dbReference>
<dbReference type="InterPro" id="IPR011761">
    <property type="entry name" value="ATP-grasp"/>
</dbReference>
<dbReference type="InterPro" id="IPR013815">
    <property type="entry name" value="ATP_grasp_subdomain_1"/>
</dbReference>
<dbReference type="InterPro" id="IPR000291">
    <property type="entry name" value="D-Ala_lig_Van_CS"/>
</dbReference>
<dbReference type="InterPro" id="IPR005905">
    <property type="entry name" value="D_ala_D_ala"/>
</dbReference>
<dbReference type="InterPro" id="IPR011095">
    <property type="entry name" value="Dala_Dala_lig_C"/>
</dbReference>
<dbReference type="InterPro" id="IPR011127">
    <property type="entry name" value="Dala_Dala_lig_N"/>
</dbReference>
<dbReference type="InterPro" id="IPR016185">
    <property type="entry name" value="PreATP-grasp_dom_sf"/>
</dbReference>
<dbReference type="NCBIfam" id="TIGR01205">
    <property type="entry name" value="D_ala_D_alaTIGR"/>
    <property type="match status" value="1"/>
</dbReference>
<dbReference type="NCBIfam" id="NF002378">
    <property type="entry name" value="PRK01372.1"/>
    <property type="match status" value="1"/>
</dbReference>
<dbReference type="PANTHER" id="PTHR23132">
    <property type="entry name" value="D-ALANINE--D-ALANINE LIGASE"/>
    <property type="match status" value="1"/>
</dbReference>
<dbReference type="PANTHER" id="PTHR23132:SF23">
    <property type="entry name" value="D-ALANINE--D-ALANINE LIGASE B"/>
    <property type="match status" value="1"/>
</dbReference>
<dbReference type="Pfam" id="PF07478">
    <property type="entry name" value="Dala_Dala_lig_C"/>
    <property type="match status" value="1"/>
</dbReference>
<dbReference type="Pfam" id="PF01820">
    <property type="entry name" value="Dala_Dala_lig_N"/>
    <property type="match status" value="1"/>
</dbReference>
<dbReference type="PIRSF" id="PIRSF039102">
    <property type="entry name" value="Ddl/VanB"/>
    <property type="match status" value="1"/>
</dbReference>
<dbReference type="SUPFAM" id="SSF56059">
    <property type="entry name" value="Glutathione synthetase ATP-binding domain-like"/>
    <property type="match status" value="1"/>
</dbReference>
<dbReference type="SUPFAM" id="SSF52440">
    <property type="entry name" value="PreATP-grasp domain"/>
    <property type="match status" value="1"/>
</dbReference>
<dbReference type="PROSITE" id="PS50975">
    <property type="entry name" value="ATP_GRASP"/>
    <property type="match status" value="1"/>
</dbReference>
<dbReference type="PROSITE" id="PS00843">
    <property type="entry name" value="DALA_DALA_LIGASE_1"/>
    <property type="match status" value="1"/>
</dbReference>
<dbReference type="PROSITE" id="PS00844">
    <property type="entry name" value="DALA_DALA_LIGASE_2"/>
    <property type="match status" value="1"/>
</dbReference>
<organism>
    <name type="scientific">Gluconobacter oxydans (strain 621H)</name>
    <name type="common">Gluconobacter suboxydans</name>
    <dbReference type="NCBI Taxonomy" id="290633"/>
    <lineage>
        <taxon>Bacteria</taxon>
        <taxon>Pseudomonadati</taxon>
        <taxon>Pseudomonadota</taxon>
        <taxon>Alphaproteobacteria</taxon>
        <taxon>Acetobacterales</taxon>
        <taxon>Acetobacteraceae</taxon>
        <taxon>Gluconobacter</taxon>
    </lineage>
</organism>
<protein>
    <recommendedName>
        <fullName evidence="2">D-alanine--D-alanine ligase</fullName>
        <ecNumber evidence="2">6.3.2.4</ecNumber>
    </recommendedName>
    <alternativeName>
        <fullName evidence="2">D-Ala-D-Ala ligase</fullName>
    </alternativeName>
    <alternativeName>
        <fullName evidence="2">D-alanylalanine synthetase</fullName>
    </alternativeName>
</protein>
<accession>Q5FUJ2</accession>
<sequence length="303" mass="32086">MKVAVLLGGTSSERPVSLVSGEAAIEALREKGHDVTPIDVGPDIATTIASLKAAAPDVVFNALHGPRGEDGAIQGVLEWLGLPYTHSGIRASAVAMDKGATRILLAAAGLPVAQGRVVTVEELAEADPLPAPYVIKPVAEGSSVGVEIVRTGDNRRAEIARTWRFGKEALVESFIPGRELTAGVMGDRALAVTDILPSETAAFYDFEAKYKAGGSRHVVPAELPQAVTDRALDYALRAHQTLGCQGASRTDFRYDEGTDTLVILEVNTQPGMTPTSLLPEQAAYCGISYPELCDWMVREALAR</sequence>
<keyword id="KW-0067">ATP-binding</keyword>
<keyword id="KW-0133">Cell shape</keyword>
<keyword id="KW-0961">Cell wall biogenesis/degradation</keyword>
<keyword id="KW-0963">Cytoplasm</keyword>
<keyword id="KW-0436">Ligase</keyword>
<keyword id="KW-0460">Magnesium</keyword>
<keyword id="KW-0464">Manganese</keyword>
<keyword id="KW-0479">Metal-binding</keyword>
<keyword id="KW-0547">Nucleotide-binding</keyword>
<keyword id="KW-0573">Peptidoglycan synthesis</keyword>
<keyword id="KW-1185">Reference proteome</keyword>
<name>DDL_GLUOX</name>